<feature type="chain" id="PRO_1000047562" description="Glutamate racemase">
    <location>
        <begin position="1"/>
        <end position="265"/>
    </location>
</feature>
<feature type="active site" description="Proton donor/acceptor" evidence="1">
    <location>
        <position position="73"/>
    </location>
</feature>
<feature type="active site" description="Proton donor/acceptor" evidence="1">
    <location>
        <position position="183"/>
    </location>
</feature>
<feature type="binding site" evidence="1">
    <location>
        <begin position="10"/>
        <end position="11"/>
    </location>
    <ligand>
        <name>substrate</name>
    </ligand>
</feature>
<feature type="binding site" evidence="1">
    <location>
        <begin position="42"/>
        <end position="43"/>
    </location>
    <ligand>
        <name>substrate</name>
    </ligand>
</feature>
<feature type="binding site" evidence="1">
    <location>
        <begin position="74"/>
        <end position="75"/>
    </location>
    <ligand>
        <name>substrate</name>
    </ligand>
</feature>
<feature type="binding site" evidence="1">
    <location>
        <begin position="184"/>
        <end position="185"/>
    </location>
    <ligand>
        <name>substrate</name>
    </ligand>
</feature>
<organism>
    <name type="scientific">Corynebacterium diphtheriae (strain ATCC 700971 / NCTC 13129 / Biotype gravis)</name>
    <dbReference type="NCBI Taxonomy" id="257309"/>
    <lineage>
        <taxon>Bacteria</taxon>
        <taxon>Bacillati</taxon>
        <taxon>Actinomycetota</taxon>
        <taxon>Actinomycetes</taxon>
        <taxon>Mycobacteriales</taxon>
        <taxon>Corynebacteriaceae</taxon>
        <taxon>Corynebacterium</taxon>
    </lineage>
</organism>
<reference key="1">
    <citation type="journal article" date="2003" name="Nucleic Acids Res.">
        <title>The complete genome sequence and analysis of Corynebacterium diphtheriae NCTC13129.</title>
        <authorList>
            <person name="Cerdeno-Tarraga A.-M."/>
            <person name="Efstratiou A."/>
            <person name="Dover L.G."/>
            <person name="Holden M.T.G."/>
            <person name="Pallen M.J."/>
            <person name="Bentley S.D."/>
            <person name="Besra G.S."/>
            <person name="Churcher C.M."/>
            <person name="James K.D."/>
            <person name="De Zoysa A."/>
            <person name="Chillingworth T."/>
            <person name="Cronin A."/>
            <person name="Dowd L."/>
            <person name="Feltwell T."/>
            <person name="Hamlin N."/>
            <person name="Holroyd S."/>
            <person name="Jagels K."/>
            <person name="Moule S."/>
            <person name="Quail M.A."/>
            <person name="Rabbinowitsch E."/>
            <person name="Rutherford K.M."/>
            <person name="Thomson N.R."/>
            <person name="Unwin L."/>
            <person name="Whitehead S."/>
            <person name="Barrell B.G."/>
            <person name="Parkhill J."/>
        </authorList>
    </citation>
    <scope>NUCLEOTIDE SEQUENCE [LARGE SCALE GENOMIC DNA]</scope>
    <source>
        <strain>ATCC 700971 / NCTC 13129 / Biotype gravis</strain>
    </source>
</reference>
<evidence type="ECO:0000255" key="1">
    <source>
        <dbReference type="HAMAP-Rule" id="MF_00258"/>
    </source>
</evidence>
<accession>Q6NFN4</accession>
<proteinExistence type="inferred from homology"/>
<comment type="function">
    <text evidence="1">Provides the (R)-glutamate required for cell wall biosynthesis.</text>
</comment>
<comment type="catalytic activity">
    <reaction evidence="1">
        <text>L-glutamate = D-glutamate</text>
        <dbReference type="Rhea" id="RHEA:12813"/>
        <dbReference type="ChEBI" id="CHEBI:29985"/>
        <dbReference type="ChEBI" id="CHEBI:29986"/>
        <dbReference type="EC" id="5.1.1.3"/>
    </reaction>
</comment>
<comment type="pathway">
    <text evidence="1">Cell wall biogenesis; peptidoglycan biosynthesis.</text>
</comment>
<comment type="similarity">
    <text evidence="1">Belongs to the aspartate/glutamate racemases family.</text>
</comment>
<keyword id="KW-0133">Cell shape</keyword>
<keyword id="KW-0961">Cell wall biogenesis/degradation</keyword>
<keyword id="KW-0413">Isomerase</keyword>
<keyword id="KW-0573">Peptidoglycan synthesis</keyword>
<keyword id="KW-1185">Reference proteome</keyword>
<name>MURI_CORDI</name>
<gene>
    <name evidence="1" type="primary">murI</name>
    <name type="ordered locus">DIP1853</name>
</gene>
<protein>
    <recommendedName>
        <fullName evidence="1">Glutamate racemase</fullName>
        <ecNumber evidence="1">5.1.1.3</ecNumber>
    </recommendedName>
</protein>
<sequence>MNNAPIGIFDSGVGGLTVARVIMEQLPNESVIYIGDTANSPYGPKPIAQVRELSLAIGEELVRRGCKMIVIACNTATSAALRDLRERFDVPVLGVILPAVRRAVSTTRNGKIGVIGTEGTIKSGAYQELFAASPSVEVHAQACPSFVSFVERGITSGRQILGVAQGYVEPLQAAGVDTLVLGCTHYPLLTGVIQLAMGDRVTLVSSAEETAKDVFKTLSMTDMLASEDSTPVRTFESTGDPVLFAQLAERFLGPHVTNVEKFAGM</sequence>
<dbReference type="EC" id="5.1.1.3" evidence="1"/>
<dbReference type="EMBL" id="BX248359">
    <property type="protein sequence ID" value="CAE50382.1"/>
    <property type="molecule type" value="Genomic_DNA"/>
</dbReference>
<dbReference type="RefSeq" id="WP_003852607.1">
    <property type="nucleotide sequence ID" value="NC_002935.2"/>
</dbReference>
<dbReference type="SMR" id="Q6NFN4"/>
<dbReference type="STRING" id="257309.DIP1853"/>
<dbReference type="KEGG" id="cdi:DIP1853"/>
<dbReference type="HOGENOM" id="CLU_052344_0_1_11"/>
<dbReference type="UniPathway" id="UPA00219"/>
<dbReference type="Proteomes" id="UP000002198">
    <property type="component" value="Chromosome"/>
</dbReference>
<dbReference type="GO" id="GO:0008881">
    <property type="term" value="F:glutamate racemase activity"/>
    <property type="evidence" value="ECO:0007669"/>
    <property type="project" value="UniProtKB-UniRule"/>
</dbReference>
<dbReference type="GO" id="GO:0071555">
    <property type="term" value="P:cell wall organization"/>
    <property type="evidence" value="ECO:0007669"/>
    <property type="project" value="UniProtKB-KW"/>
</dbReference>
<dbReference type="GO" id="GO:0009252">
    <property type="term" value="P:peptidoglycan biosynthetic process"/>
    <property type="evidence" value="ECO:0007669"/>
    <property type="project" value="UniProtKB-UniRule"/>
</dbReference>
<dbReference type="GO" id="GO:0008360">
    <property type="term" value="P:regulation of cell shape"/>
    <property type="evidence" value="ECO:0007669"/>
    <property type="project" value="UniProtKB-KW"/>
</dbReference>
<dbReference type="FunFam" id="3.40.50.1860:FF:000002">
    <property type="entry name" value="Glutamate racemase"/>
    <property type="match status" value="1"/>
</dbReference>
<dbReference type="Gene3D" id="3.40.50.1860">
    <property type="match status" value="2"/>
</dbReference>
<dbReference type="HAMAP" id="MF_00258">
    <property type="entry name" value="Glu_racemase"/>
    <property type="match status" value="1"/>
</dbReference>
<dbReference type="InterPro" id="IPR015942">
    <property type="entry name" value="Asp/Glu/hydantoin_racemase"/>
</dbReference>
<dbReference type="InterPro" id="IPR001920">
    <property type="entry name" value="Asp/Glu_race"/>
</dbReference>
<dbReference type="InterPro" id="IPR018187">
    <property type="entry name" value="Asp/Glu_racemase_AS_1"/>
</dbReference>
<dbReference type="InterPro" id="IPR033134">
    <property type="entry name" value="Asp/Glu_racemase_AS_2"/>
</dbReference>
<dbReference type="InterPro" id="IPR004391">
    <property type="entry name" value="Glu_race"/>
</dbReference>
<dbReference type="NCBIfam" id="TIGR00067">
    <property type="entry name" value="glut_race"/>
    <property type="match status" value="1"/>
</dbReference>
<dbReference type="PANTHER" id="PTHR21198">
    <property type="entry name" value="GLUTAMATE RACEMASE"/>
    <property type="match status" value="1"/>
</dbReference>
<dbReference type="PANTHER" id="PTHR21198:SF2">
    <property type="entry name" value="GLUTAMATE RACEMASE"/>
    <property type="match status" value="1"/>
</dbReference>
<dbReference type="Pfam" id="PF01177">
    <property type="entry name" value="Asp_Glu_race"/>
    <property type="match status" value="1"/>
</dbReference>
<dbReference type="SUPFAM" id="SSF53681">
    <property type="entry name" value="Aspartate/glutamate racemase"/>
    <property type="match status" value="2"/>
</dbReference>
<dbReference type="PROSITE" id="PS00923">
    <property type="entry name" value="ASP_GLU_RACEMASE_1"/>
    <property type="match status" value="1"/>
</dbReference>
<dbReference type="PROSITE" id="PS00924">
    <property type="entry name" value="ASP_GLU_RACEMASE_2"/>
    <property type="match status" value="1"/>
</dbReference>